<feature type="chain" id="PRO_0000088215" description="3-phosphoshikimate 1-carboxyvinyltransferase">
    <location>
        <begin position="1"/>
        <end position="455"/>
    </location>
</feature>
<feature type="region of interest" description="Disordered" evidence="2">
    <location>
        <begin position="1"/>
        <end position="25"/>
    </location>
</feature>
<feature type="compositionally biased region" description="Polar residues" evidence="2">
    <location>
        <begin position="1"/>
        <end position="19"/>
    </location>
</feature>
<feature type="active site" description="Proton acceptor" evidence="1">
    <location>
        <position position="326"/>
    </location>
</feature>
<feature type="binding site" evidence="1">
    <location>
        <position position="28"/>
    </location>
    <ligand>
        <name>phosphoenolpyruvate</name>
        <dbReference type="ChEBI" id="CHEBI:58702"/>
    </ligand>
</feature>
<feature type="binding site" evidence="3 10 11 12">
    <location>
        <position position="29"/>
    </location>
    <ligand>
        <name>3-phosphoshikimate</name>
        <dbReference type="ChEBI" id="CHEBI:145989"/>
    </ligand>
</feature>
<feature type="binding site" evidence="3 10 11 12">
    <location>
        <position position="33"/>
    </location>
    <ligand>
        <name>3-phosphoshikimate</name>
        <dbReference type="ChEBI" id="CHEBI:145989"/>
    </ligand>
</feature>
<feature type="binding site" evidence="1">
    <location>
        <position position="128"/>
    </location>
    <ligand>
        <name>phosphoenolpyruvate</name>
        <dbReference type="ChEBI" id="CHEBI:58702"/>
    </ligand>
</feature>
<feature type="binding site" evidence="3 10 11 12">
    <location>
        <position position="173"/>
    </location>
    <ligand>
        <name>3-phosphoshikimate</name>
        <dbReference type="ChEBI" id="CHEBI:145989"/>
    </ligand>
</feature>
<feature type="binding site" evidence="3 10 11 12">
    <location>
        <position position="174"/>
    </location>
    <ligand>
        <name>3-phosphoshikimate</name>
        <dbReference type="ChEBI" id="CHEBI:145989"/>
    </ligand>
</feature>
<feature type="binding site" evidence="3 10 11 12">
    <location>
        <position position="175"/>
    </location>
    <ligand>
        <name>3-phosphoshikimate</name>
        <dbReference type="ChEBI" id="CHEBI:145989"/>
    </ligand>
</feature>
<feature type="binding site" evidence="1">
    <location>
        <position position="175"/>
    </location>
    <ligand>
        <name>phosphoenolpyruvate</name>
        <dbReference type="ChEBI" id="CHEBI:58702"/>
    </ligand>
</feature>
<feature type="binding site" evidence="3 10 11 12">
    <location>
        <position position="326"/>
    </location>
    <ligand>
        <name>3-phosphoshikimate</name>
        <dbReference type="ChEBI" id="CHEBI:145989"/>
    </ligand>
</feature>
<feature type="binding site" evidence="3 10 11 12">
    <location>
        <position position="353"/>
    </location>
    <ligand>
        <name>3-phosphoshikimate</name>
        <dbReference type="ChEBI" id="CHEBI:145989"/>
    </ligand>
</feature>
<feature type="binding site" evidence="1">
    <location>
        <position position="357"/>
    </location>
    <ligand>
        <name>phosphoenolpyruvate</name>
        <dbReference type="ChEBI" id="CHEBI:58702"/>
    </ligand>
</feature>
<feature type="binding site" evidence="1">
    <location>
        <position position="405"/>
    </location>
    <ligand>
        <name>phosphoenolpyruvate</name>
        <dbReference type="ChEBI" id="CHEBI:58702"/>
    </ligand>
</feature>
<feature type="mutagenesis site" description="Confers sensitivity to glyphosate allowing glyphosate to bind in its extended, inhibitory conformation." evidence="3">
    <original>A</original>
    <variation>G</variation>
    <location>
        <position position="100"/>
    </location>
</feature>
<feature type="sequence conflict" description="In Ref. 2; AA sequence." evidence="7" ref="2">
    <original>S</original>
    <variation>L</variation>
    <location>
        <position position="2"/>
    </location>
</feature>
<feature type="strand" evidence="16">
    <location>
        <begin position="10"/>
        <end position="13"/>
    </location>
</feature>
<feature type="strand" evidence="16">
    <location>
        <begin position="19"/>
        <end position="23"/>
    </location>
</feature>
<feature type="helix" evidence="16">
    <location>
        <begin position="28"/>
        <end position="40"/>
    </location>
</feature>
<feature type="strand" evidence="16">
    <location>
        <begin position="41"/>
        <end position="49"/>
    </location>
</feature>
<feature type="helix" evidence="16">
    <location>
        <begin position="54"/>
        <end position="65"/>
    </location>
</feature>
<feature type="strand" evidence="16">
    <location>
        <begin position="69"/>
        <end position="73"/>
    </location>
</feature>
<feature type="strand" evidence="16">
    <location>
        <begin position="76"/>
        <end position="82"/>
    </location>
</feature>
<feature type="helix" evidence="16">
    <location>
        <begin position="100"/>
        <end position="111"/>
    </location>
</feature>
<feature type="strand" evidence="16">
    <location>
        <begin position="113"/>
        <end position="120"/>
    </location>
</feature>
<feature type="helix" evidence="16">
    <location>
        <begin position="125"/>
        <end position="127"/>
    </location>
</feature>
<feature type="helix" evidence="16">
    <location>
        <begin position="131"/>
        <end position="139"/>
    </location>
</feature>
<feature type="strand" evidence="16">
    <location>
        <begin position="143"/>
        <end position="147"/>
    </location>
</feature>
<feature type="turn" evidence="16">
    <location>
        <begin position="148"/>
        <end position="150"/>
    </location>
</feature>
<feature type="strand" evidence="16">
    <location>
        <begin position="151"/>
        <end position="157"/>
    </location>
</feature>
<feature type="strand" evidence="16">
    <location>
        <begin position="166"/>
        <end position="168"/>
    </location>
</feature>
<feature type="strand" evidence="16">
    <location>
        <begin position="170"/>
        <end position="172"/>
    </location>
</feature>
<feature type="helix" evidence="16">
    <location>
        <begin position="174"/>
        <end position="185"/>
    </location>
</feature>
<feature type="strand" evidence="16">
    <location>
        <begin position="187"/>
        <end position="197"/>
    </location>
</feature>
<feature type="helix" evidence="16">
    <location>
        <begin position="202"/>
        <end position="209"/>
    </location>
</feature>
<feature type="strand" evidence="16">
    <location>
        <begin position="214"/>
        <end position="218"/>
    </location>
</feature>
<feature type="strand" evidence="16">
    <location>
        <begin position="224"/>
        <end position="229"/>
    </location>
</feature>
<feature type="strand" evidence="16">
    <location>
        <begin position="238"/>
        <end position="240"/>
    </location>
</feature>
<feature type="helix" evidence="16">
    <location>
        <begin position="245"/>
        <end position="257"/>
    </location>
</feature>
<feature type="strand" evidence="16">
    <location>
        <begin position="262"/>
        <end position="269"/>
    </location>
</feature>
<feature type="helix" evidence="16">
    <location>
        <begin position="272"/>
        <end position="274"/>
    </location>
</feature>
<feature type="helix" evidence="16">
    <location>
        <begin position="276"/>
        <end position="284"/>
    </location>
</feature>
<feature type="strand" evidence="16">
    <location>
        <begin position="287"/>
        <end position="296"/>
    </location>
</feature>
<feature type="strand" evidence="16">
    <location>
        <begin position="299"/>
        <end position="307"/>
    </location>
</feature>
<feature type="helix" evidence="16">
    <location>
        <begin position="318"/>
        <end position="323"/>
    </location>
</feature>
<feature type="helix" evidence="16">
    <location>
        <begin position="325"/>
        <end position="327"/>
    </location>
</feature>
<feature type="helix" evidence="16">
    <location>
        <begin position="328"/>
        <end position="335"/>
    </location>
</feature>
<feature type="strand" evidence="16">
    <location>
        <begin position="338"/>
        <end position="344"/>
    </location>
</feature>
<feature type="helix" evidence="16">
    <location>
        <begin position="348"/>
        <end position="352"/>
    </location>
</feature>
<feature type="strand" evidence="16">
    <location>
        <begin position="353"/>
        <end position="355"/>
    </location>
</feature>
<feature type="helix" evidence="16">
    <location>
        <begin position="357"/>
        <end position="367"/>
    </location>
</feature>
<feature type="strand" evidence="16">
    <location>
        <begin position="371"/>
        <end position="374"/>
    </location>
</feature>
<feature type="strand" evidence="16">
    <location>
        <begin position="379"/>
        <end position="382"/>
    </location>
</feature>
<feature type="helix" evidence="16">
    <location>
        <begin position="404"/>
        <end position="414"/>
    </location>
</feature>
<feature type="strand" evidence="16">
    <location>
        <begin position="417"/>
        <end position="419"/>
    </location>
</feature>
<feature type="strand" evidence="16">
    <location>
        <begin position="421"/>
        <end position="424"/>
    </location>
</feature>
<feature type="helix" evidence="16">
    <location>
        <begin position="429"/>
        <end position="431"/>
    </location>
</feature>
<feature type="helix" evidence="16">
    <location>
        <begin position="436"/>
        <end position="443"/>
    </location>
</feature>
<feature type="strand" evidence="16">
    <location>
        <begin position="446"/>
        <end position="449"/>
    </location>
</feature>
<protein>
    <recommendedName>
        <fullName evidence="1">3-phosphoshikimate 1-carboxyvinyltransferase</fullName>
        <ecNumber evidence="3">2.5.1.19</ecNumber>
    </recommendedName>
    <alternativeName>
        <fullName evidence="1 6">5-enolpyruvylshikimate-3-phosphate synthase</fullName>
        <shortName evidence="1">EPSP synthase</shortName>
        <shortName evidence="1">EPSPS</shortName>
    </alternativeName>
    <alternativeName>
        <fullName evidence="5">CP4 EPSP synthase</fullName>
    </alternativeName>
</protein>
<sequence>MSHGASSRPATARKSSGLSGTVRIPGDKSISHRSFMFGGLASGETRITGLLEGEDVINTGKAMQAMGARIRKEGDTWIIDGVGNGGLLAPEAPLDFGNAATGCRLTMGLVGVYDFDSTFIGDASLTKRPMGRVLNPLREMGVQVKSEDGDRLPVTLRGPKTPTPITYRVPMASAQVKSAVLLAGLNTPGITTVIEPIMTRDHTEKMLQGFGANLTVETDADGVRTIRLEGRGKLTGQVIDVPGDPSSTAFPLVAALLVPGSDVTILNVLMNPTRTGLILTLQEMGADIEVINPRLAGGEDVADLRVRSSTLKGVTVPEDRAPSMIDEYPILAVAAAFAEGATVMNGLEELRVKESDRLSAVANGLKLNGVDCDEGETSLVVRGRPDGKGLGNASGAAVATHLDHRIAMSFLVMGLVSENPVTVDDATMIATSFPEFMDLMAGLGAKIELSDTKAA</sequence>
<dbReference type="EC" id="2.5.1.19" evidence="3"/>
<dbReference type="PDB" id="2GG4">
    <property type="method" value="X-ray"/>
    <property type="resolution" value="2.10 A"/>
    <property type="chains" value="A=1-455"/>
</dbReference>
<dbReference type="PDB" id="2GG6">
    <property type="method" value="X-ray"/>
    <property type="resolution" value="1.64 A"/>
    <property type="chains" value="A=1-455"/>
</dbReference>
<dbReference type="PDB" id="2GGA">
    <property type="method" value="X-ray"/>
    <property type="resolution" value="1.70 A"/>
    <property type="chains" value="A=1-455"/>
</dbReference>
<dbReference type="PDB" id="2GGD">
    <property type="method" value="X-ray"/>
    <property type="resolution" value="1.70 A"/>
    <property type="chains" value="A=1-455"/>
</dbReference>
<dbReference type="PDB" id="2PQB">
    <property type="method" value="X-ray"/>
    <property type="resolution" value="1.80 A"/>
    <property type="chains" value="A=6-450"/>
</dbReference>
<dbReference type="PDB" id="2PQC">
    <property type="method" value="X-ray"/>
    <property type="resolution" value="1.60 A"/>
    <property type="chains" value="A=6-450"/>
</dbReference>
<dbReference type="PDB" id="2PQD">
    <property type="method" value="X-ray"/>
    <property type="resolution" value="1.77 A"/>
    <property type="chains" value="A=6-450"/>
</dbReference>
<dbReference type="PDBsum" id="2GG4"/>
<dbReference type="PDBsum" id="2GG6"/>
<dbReference type="PDBsum" id="2GGA"/>
<dbReference type="PDBsum" id="2GGD"/>
<dbReference type="PDBsum" id="2PQB"/>
<dbReference type="PDBsum" id="2PQC"/>
<dbReference type="PDBsum" id="2PQD"/>
<dbReference type="SMR" id="Q9R4E4"/>
<dbReference type="BRENDA" id="2.5.1.19">
    <property type="organism ID" value="206"/>
</dbReference>
<dbReference type="UniPathway" id="UPA00053">
    <property type="reaction ID" value="UER00089"/>
</dbReference>
<dbReference type="EvolutionaryTrace" id="Q9R4E4"/>
<dbReference type="GO" id="GO:0005737">
    <property type="term" value="C:cytoplasm"/>
    <property type="evidence" value="ECO:0007669"/>
    <property type="project" value="UniProtKB-SubCell"/>
</dbReference>
<dbReference type="GO" id="GO:0003866">
    <property type="term" value="F:3-phosphoshikimate 1-carboxyvinyltransferase activity"/>
    <property type="evidence" value="ECO:0007669"/>
    <property type="project" value="UniProtKB-UniRule"/>
</dbReference>
<dbReference type="GO" id="GO:0008652">
    <property type="term" value="P:amino acid biosynthetic process"/>
    <property type="evidence" value="ECO:0007669"/>
    <property type="project" value="UniProtKB-KW"/>
</dbReference>
<dbReference type="GO" id="GO:0009073">
    <property type="term" value="P:aromatic amino acid family biosynthetic process"/>
    <property type="evidence" value="ECO:0007669"/>
    <property type="project" value="UniProtKB-KW"/>
</dbReference>
<dbReference type="GO" id="GO:0009423">
    <property type="term" value="P:chorismate biosynthetic process"/>
    <property type="evidence" value="ECO:0007669"/>
    <property type="project" value="UniProtKB-UniRule"/>
</dbReference>
<dbReference type="GO" id="GO:0009635">
    <property type="term" value="P:response to herbicide"/>
    <property type="evidence" value="ECO:0007669"/>
    <property type="project" value="UniProtKB-KW"/>
</dbReference>
<dbReference type="CDD" id="cd01556">
    <property type="entry name" value="EPSP_synthase"/>
    <property type="match status" value="1"/>
</dbReference>
<dbReference type="FunFam" id="3.65.10.10:FF:000005">
    <property type="entry name" value="3-phosphoshikimate 1-carboxyvinyltransferase"/>
    <property type="match status" value="1"/>
</dbReference>
<dbReference type="FunFam" id="3.65.10.10:FF:000006">
    <property type="entry name" value="3-phosphoshikimate 1-carboxyvinyltransferase"/>
    <property type="match status" value="1"/>
</dbReference>
<dbReference type="Gene3D" id="3.65.10.10">
    <property type="entry name" value="Enolpyruvate transferase domain"/>
    <property type="match status" value="2"/>
</dbReference>
<dbReference type="HAMAP" id="MF_00210">
    <property type="entry name" value="EPSP_synth"/>
    <property type="match status" value="1"/>
</dbReference>
<dbReference type="InterPro" id="IPR001986">
    <property type="entry name" value="Enolpyruvate_Tfrase_dom"/>
</dbReference>
<dbReference type="InterPro" id="IPR036968">
    <property type="entry name" value="Enolpyruvate_Tfrase_sf"/>
</dbReference>
<dbReference type="InterPro" id="IPR006264">
    <property type="entry name" value="EPSP_synthase"/>
</dbReference>
<dbReference type="InterPro" id="IPR023193">
    <property type="entry name" value="EPSP_synthase_CS"/>
</dbReference>
<dbReference type="InterPro" id="IPR013792">
    <property type="entry name" value="RNA3'P_cycl/enolpyr_Trfase_a/b"/>
</dbReference>
<dbReference type="NCBIfam" id="TIGR01356">
    <property type="entry name" value="aroA"/>
    <property type="match status" value="1"/>
</dbReference>
<dbReference type="PANTHER" id="PTHR21090">
    <property type="entry name" value="AROM/DEHYDROQUINATE SYNTHASE"/>
    <property type="match status" value="1"/>
</dbReference>
<dbReference type="PANTHER" id="PTHR21090:SF5">
    <property type="entry name" value="PENTAFUNCTIONAL AROM POLYPEPTIDE"/>
    <property type="match status" value="1"/>
</dbReference>
<dbReference type="Pfam" id="PF00275">
    <property type="entry name" value="EPSP_synthase"/>
    <property type="match status" value="1"/>
</dbReference>
<dbReference type="PIRSF" id="PIRSF000505">
    <property type="entry name" value="EPSPS"/>
    <property type="match status" value="1"/>
</dbReference>
<dbReference type="SUPFAM" id="SSF55205">
    <property type="entry name" value="EPT/RTPC-like"/>
    <property type="match status" value="1"/>
</dbReference>
<dbReference type="PROSITE" id="PS00104">
    <property type="entry name" value="EPSP_SYNTHASE_1"/>
    <property type="match status" value="1"/>
</dbReference>
<dbReference type="PROSITE" id="PS00885">
    <property type="entry name" value="EPSP_SYNTHASE_2"/>
    <property type="match status" value="1"/>
</dbReference>
<evidence type="ECO:0000255" key="1">
    <source>
        <dbReference type="HAMAP-Rule" id="MF_00210"/>
    </source>
</evidence>
<evidence type="ECO:0000256" key="2">
    <source>
        <dbReference type="SAM" id="MobiDB-lite"/>
    </source>
</evidence>
<evidence type="ECO:0000269" key="3">
    <source>
    </source>
</evidence>
<evidence type="ECO:0000269" key="4">
    <source>
    </source>
</evidence>
<evidence type="ECO:0000303" key="5">
    <source>
    </source>
</evidence>
<evidence type="ECO:0000303" key="6">
    <source ref="1"/>
</evidence>
<evidence type="ECO:0000305" key="7"/>
<evidence type="ECO:0000305" key="8">
    <source>
    </source>
</evidence>
<evidence type="ECO:0007744" key="9">
    <source>
        <dbReference type="PDB" id="2GG4"/>
    </source>
</evidence>
<evidence type="ECO:0007744" key="10">
    <source>
        <dbReference type="PDB" id="2GG6"/>
    </source>
</evidence>
<evidence type="ECO:0007744" key="11">
    <source>
        <dbReference type="PDB" id="2GGA"/>
    </source>
</evidence>
<evidence type="ECO:0007744" key="12">
    <source>
        <dbReference type="PDB" id="2GGD"/>
    </source>
</evidence>
<evidence type="ECO:0007744" key="13">
    <source>
        <dbReference type="PDB" id="2PQB"/>
    </source>
</evidence>
<evidence type="ECO:0007744" key="14">
    <source>
        <dbReference type="PDB" id="2PQC"/>
    </source>
</evidence>
<evidence type="ECO:0007744" key="15">
    <source>
        <dbReference type="PDB" id="2PQD"/>
    </source>
</evidence>
<evidence type="ECO:0007829" key="16">
    <source>
        <dbReference type="PDB" id="2PQC"/>
    </source>
</evidence>
<reference key="1">
    <citation type="patent" date="1997-05-27" number="US5633435">
        <title>Glyphosate-tolerant 5-enolpyruvylshikimate-3-phosphate synthases.</title>
        <authorList>
            <person name="Barry G.F."/>
            <person name="Kishore G.M."/>
            <person name="Padgette S.R."/>
            <person name="Stallings W.C."/>
        </authorList>
    </citation>
    <scope>NUCLEOTIDE SEQUENCE [GENOMIC DNA]</scope>
    <scope>PROTEIN SEQUENCE OF 1-28; 47-61 AND 321-333</scope>
</reference>
<reference key="2">
    <citation type="journal article" date="1996" name="J. Nutr.">
        <title>The expressed protein in glyphosate-tolerant soybean, 5-enolpyruvylshikimate-3-phosphate synthase from Agrobacterium sp. strain CP4, is rapidly digested in vitro and is not toxic to acutely gavaged mice.</title>
        <authorList>
            <person name="Harrison L.A."/>
            <person name="Bailey M.R."/>
            <person name="Naylor M.W."/>
            <person name="Ream J.E."/>
            <person name="Hammond B.G."/>
            <person name="Nida D.L."/>
            <person name="Burnette B.L."/>
            <person name="Nickson T.E."/>
            <person name="Mitsky T.A."/>
            <person name="Taylor M.L."/>
            <person name="Fuchs R.L."/>
            <person name="Padgette S.R."/>
        </authorList>
    </citation>
    <scope>PROTEIN SEQUENCE OF 1-15</scope>
</reference>
<reference evidence="9 10 11 12" key="3">
    <citation type="journal article" date="2006" name="Proc. Natl. Acad. Sci. U.S.A.">
        <title>Molecular basis for the herbicide resistance of Roundup Ready crops.</title>
        <authorList>
            <person name="Funke T."/>
            <person name="Han H."/>
            <person name="Healy-Fried M.L."/>
            <person name="Fischer M."/>
            <person name="Schonbrunn E."/>
        </authorList>
    </citation>
    <scope>X-RAY CRYSTALLOGRAPHY (1.64 ANGSTROMS) OF WILD-TYPE AND MUTANT GLY-100 IN COMPLEXES WITH SHIKIMATE-3-PHOSPHATE AND GLYPHOSATE</scope>
    <scope>FUNCTION</scope>
    <scope>CATALYTIC ACTIVITY</scope>
    <scope>BIOPHYSICOCHEMICAL PROPERTIES</scope>
    <scope>MUTAGENESIS OF ALA-100</scope>
    <scope>ACTIVITY REGULATION</scope>
    <scope>BIOTECHNOLOGY</scope>
</reference>
<reference evidence="13 14 15" key="4">
    <citation type="journal article" date="2007" name="Biochemistry">
        <title>Differential inhibition of class I and class II 5-enolpyruvylshikimate-3-phosphate synthases by tetrahedral reaction intermediate analogues.</title>
        <authorList>
            <person name="Funke T."/>
            <person name="Healy-Fried M.L."/>
            <person name="Han H."/>
            <person name="Alberg D.G."/>
            <person name="Bartlett P.A."/>
            <person name="Schonbrunn E."/>
        </authorList>
    </citation>
    <scope>X-RAY CRYSTALLOGRAPHY (1.60 ANGSTROMS) OF 6-450 OF WILD-TYPE AND MUTANT GLY-100 IN COMPLEX WITH TETRAHEDRAL REACTION INTERMEDIATE ANALOGS</scope>
    <scope>FUNCTION</scope>
    <scope>ACTIVITY REGULATION</scope>
    <source>
        <strain>CP4</strain>
    </source>
</reference>
<name>AROA_AGRSC</name>
<gene>
    <name evidence="1" type="primary">aroA</name>
</gene>
<keyword id="KW-0002">3D-structure</keyword>
<keyword id="KW-0028">Amino-acid biosynthesis</keyword>
<keyword id="KW-0057">Aromatic amino acid biosynthesis</keyword>
<keyword id="KW-0963">Cytoplasm</keyword>
<keyword id="KW-0903">Direct protein sequencing</keyword>
<keyword id="KW-0308">Genetically modified food</keyword>
<keyword id="KW-0359">Herbicide resistance</keyword>
<keyword id="KW-0808">Transferase</keyword>
<comment type="function">
    <text evidence="1 3 4">Catalyzes the transfer of the enolpyruvyl moiety of phosphoenolpyruvate (PEP) to the 5-hydroxyl of shikimate-3-phosphate (S3P) to produce enolpyruvyl shikimate-3-phosphate and inorganic phosphate.</text>
</comment>
<comment type="catalytic activity">
    <reaction evidence="3">
        <text>3-phosphoshikimate + phosphoenolpyruvate = 5-O-(1-carboxyvinyl)-3-phosphoshikimate + phosphate</text>
        <dbReference type="Rhea" id="RHEA:21256"/>
        <dbReference type="ChEBI" id="CHEBI:43474"/>
        <dbReference type="ChEBI" id="CHEBI:57701"/>
        <dbReference type="ChEBI" id="CHEBI:58702"/>
        <dbReference type="ChEBI" id="CHEBI:145989"/>
        <dbReference type="EC" id="2.5.1.19"/>
    </reaction>
    <physiologicalReaction direction="left-to-right" evidence="8">
        <dbReference type="Rhea" id="RHEA:21257"/>
    </physiologicalReaction>
</comment>
<comment type="activity regulation">
    <text evidence="3 4">Is resistant to inhibition by glyphosate (glyphosate-tolerant) like other members of class II EPSPS, in contrast to class I EPSPS, which is glyphosate-sensitive (PubMed:16916934). Is much less sensitive to inhibition by the (R)-difluoromethyl and (R)-phosphonate analogs of the tetrahedral reaction intermediate than the representative class I EPSPS from E.coli (PubMed:17958399). Is highly activated in the presence of cations, such as NH4(+), Rb(+), and K(+) (PubMed:16916934).</text>
</comment>
<comment type="biophysicochemical properties">
    <kinetics>
        <KM evidence="3">3.5 mM for phosphoenolpyruvate</KM>
        <KM evidence="3">0.2 mM for phosphoenolpyruvate (in the presence of 100 mM KCl)</KM>
    </kinetics>
</comment>
<comment type="pathway">
    <text evidence="1 7">Metabolic intermediate biosynthesis; chorismate biosynthesis; chorismate from D-erythrose 4-phosphate and phosphoenolpyruvate: step 6/7.</text>
</comment>
<comment type="subunit">
    <text evidence="1">Monomer.</text>
</comment>
<comment type="subcellular location">
    <subcellularLocation>
        <location evidence="1">Cytoplasm</location>
    </subcellularLocation>
</comment>
<comment type="biotechnology">
    <text evidence="8">Roundup Ready crop lines contain a gene derived from Agrobacteriums sp. strain CP4, encoding a glyphosate-tolerant enzyme, the so-called CP4 EPSP synthase. Expression of this enzyme confers crop resistance to glyphosate, enabling more effective weed control by allowing postemergent herbicide application.</text>
</comment>
<comment type="similarity">
    <text evidence="1 7">Belongs to the EPSP synthase family.</text>
</comment>
<accession>Q9R4E4</accession>
<proteinExistence type="evidence at protein level"/>
<organism>
    <name type="scientific">Agrobacterium sp. (strain CP4)</name>
    <dbReference type="NCBI Taxonomy" id="268951"/>
    <lineage>
        <taxon>Bacteria</taxon>
        <taxon>Pseudomonadati</taxon>
        <taxon>Pseudomonadota</taxon>
        <taxon>Alphaproteobacteria</taxon>
        <taxon>Hyphomicrobiales</taxon>
        <taxon>Rhizobiaceae</taxon>
        <taxon>Rhizobium/Agrobacterium group</taxon>
        <taxon>Agrobacterium</taxon>
    </lineage>
</organism>